<sequence>MSNSIVIIGSGFAARQLVKNIRKQDASIPLTLIAADSMDEYNKPDLSHVISQGQRADDLTRQTAGEFAEQFNLRLFPHTWVTDIDAEAHVVKSQNNQWQYDKLVLATGASAFVPPVPGRELMLTLNSQQEYRACETQLRDARRVLIVGGGLIGIELAMDFCRAGKAVTLIDNAASILASLMLPEVSSRLQHRLTEMGVHLLLKSQLQGLEKTDSGILATLDRQRSIEVDAVIAATGLRPETALARRAGLTINRGVCVDSYLQTSNADIYALGDCAEINGQVLPFLQPIQLSAMVLAKNLLGNNTPLKLPAMLVKIKTPELPLHLAGETQRQDLRWQINTERQGMVARGVDDGDQLRAFVVSEDRMKEAFGLLKTLPM</sequence>
<evidence type="ECO:0000255" key="1">
    <source>
        <dbReference type="HAMAP-Rule" id="MF_01313"/>
    </source>
</evidence>
<feature type="chain" id="PRO_1000141169" description="Nitric oxide reductase FlRd-NAD(+) reductase">
    <location>
        <begin position="1"/>
        <end position="377"/>
    </location>
</feature>
<gene>
    <name evidence="1" type="primary">norW</name>
    <name evidence="1" type="synonym">flrR</name>
    <name type="ordered locus">ECIAI39_2897</name>
</gene>
<keyword id="KW-0963">Cytoplasm</keyword>
<keyword id="KW-0274">FAD</keyword>
<keyword id="KW-0285">Flavoprotein</keyword>
<keyword id="KW-0520">NAD</keyword>
<keyword id="KW-0560">Oxidoreductase</keyword>
<dbReference type="EC" id="1.18.1.-" evidence="1"/>
<dbReference type="EMBL" id="CU928164">
    <property type="protein sequence ID" value="CAR19018.1"/>
    <property type="molecule type" value="Genomic_DNA"/>
</dbReference>
<dbReference type="RefSeq" id="WP_000071561.1">
    <property type="nucleotide sequence ID" value="NC_011750.1"/>
</dbReference>
<dbReference type="RefSeq" id="YP_002408830.1">
    <property type="nucleotide sequence ID" value="NC_011750.1"/>
</dbReference>
<dbReference type="SMR" id="B7NSJ1"/>
<dbReference type="STRING" id="585057.ECIAI39_2897"/>
<dbReference type="KEGG" id="ect:ECIAI39_2897"/>
<dbReference type="PATRIC" id="fig|585057.6.peg.3005"/>
<dbReference type="HOGENOM" id="CLU_003291_4_4_6"/>
<dbReference type="UniPathway" id="UPA00638"/>
<dbReference type="Proteomes" id="UP000000749">
    <property type="component" value="Chromosome"/>
</dbReference>
<dbReference type="GO" id="GO:0005737">
    <property type="term" value="C:cytoplasm"/>
    <property type="evidence" value="ECO:0007669"/>
    <property type="project" value="UniProtKB-SubCell"/>
</dbReference>
<dbReference type="GO" id="GO:0016731">
    <property type="term" value="F:oxidoreductase activity, acting on iron-sulfur proteins as donors, NAD or NADP as acceptor"/>
    <property type="evidence" value="ECO:0007669"/>
    <property type="project" value="UniProtKB-UniRule"/>
</dbReference>
<dbReference type="FunFam" id="3.50.50.60:FF:000075">
    <property type="entry name" value="Nitric oxide reductase FlRd-NAD(+) reductase"/>
    <property type="match status" value="1"/>
</dbReference>
<dbReference type="Gene3D" id="3.30.390.120">
    <property type="match status" value="1"/>
</dbReference>
<dbReference type="Gene3D" id="3.50.50.60">
    <property type="entry name" value="FAD/NAD(P)-binding domain"/>
    <property type="match status" value="2"/>
</dbReference>
<dbReference type="HAMAP" id="MF_01313">
    <property type="entry name" value="NorW"/>
    <property type="match status" value="1"/>
</dbReference>
<dbReference type="InterPro" id="IPR050260">
    <property type="entry name" value="FAD-bd_OxRdtase"/>
</dbReference>
<dbReference type="InterPro" id="IPR036188">
    <property type="entry name" value="FAD/NAD-bd_sf"/>
</dbReference>
<dbReference type="InterPro" id="IPR023753">
    <property type="entry name" value="FAD/NAD-binding_dom"/>
</dbReference>
<dbReference type="InterPro" id="IPR023961">
    <property type="entry name" value="NO_rdtase_NorW"/>
</dbReference>
<dbReference type="InterPro" id="IPR041364">
    <property type="entry name" value="Rbx-bd"/>
</dbReference>
<dbReference type="NCBIfam" id="NF003437">
    <property type="entry name" value="PRK04965.1"/>
    <property type="match status" value="1"/>
</dbReference>
<dbReference type="PANTHER" id="PTHR43429:SF3">
    <property type="entry name" value="NITRITE REDUCTASE [NAD(P)H]"/>
    <property type="match status" value="1"/>
</dbReference>
<dbReference type="PANTHER" id="PTHR43429">
    <property type="entry name" value="PYRIDINE NUCLEOTIDE-DISULFIDE OXIDOREDUCTASE DOMAIN-CONTAINING"/>
    <property type="match status" value="1"/>
</dbReference>
<dbReference type="Pfam" id="PF07992">
    <property type="entry name" value="Pyr_redox_2"/>
    <property type="match status" value="1"/>
</dbReference>
<dbReference type="Pfam" id="PF18113">
    <property type="entry name" value="Rbx_binding"/>
    <property type="match status" value="1"/>
</dbReference>
<dbReference type="PRINTS" id="PR00368">
    <property type="entry name" value="FADPNR"/>
</dbReference>
<dbReference type="PRINTS" id="PR00411">
    <property type="entry name" value="PNDRDTASEI"/>
</dbReference>
<dbReference type="SUPFAM" id="SSF51905">
    <property type="entry name" value="FAD/NAD(P)-binding domain"/>
    <property type="match status" value="1"/>
</dbReference>
<reference key="1">
    <citation type="journal article" date="2009" name="PLoS Genet.">
        <title>Organised genome dynamics in the Escherichia coli species results in highly diverse adaptive paths.</title>
        <authorList>
            <person name="Touchon M."/>
            <person name="Hoede C."/>
            <person name="Tenaillon O."/>
            <person name="Barbe V."/>
            <person name="Baeriswyl S."/>
            <person name="Bidet P."/>
            <person name="Bingen E."/>
            <person name="Bonacorsi S."/>
            <person name="Bouchier C."/>
            <person name="Bouvet O."/>
            <person name="Calteau A."/>
            <person name="Chiapello H."/>
            <person name="Clermont O."/>
            <person name="Cruveiller S."/>
            <person name="Danchin A."/>
            <person name="Diard M."/>
            <person name="Dossat C."/>
            <person name="Karoui M.E."/>
            <person name="Frapy E."/>
            <person name="Garry L."/>
            <person name="Ghigo J.M."/>
            <person name="Gilles A.M."/>
            <person name="Johnson J."/>
            <person name="Le Bouguenec C."/>
            <person name="Lescat M."/>
            <person name="Mangenot S."/>
            <person name="Martinez-Jehanne V."/>
            <person name="Matic I."/>
            <person name="Nassif X."/>
            <person name="Oztas S."/>
            <person name="Petit M.A."/>
            <person name="Pichon C."/>
            <person name="Rouy Z."/>
            <person name="Ruf C.S."/>
            <person name="Schneider D."/>
            <person name="Tourret J."/>
            <person name="Vacherie B."/>
            <person name="Vallenet D."/>
            <person name="Medigue C."/>
            <person name="Rocha E.P.C."/>
            <person name="Denamur E."/>
        </authorList>
    </citation>
    <scope>NUCLEOTIDE SEQUENCE [LARGE SCALE GENOMIC DNA]</scope>
    <source>
        <strain>IAI39 / ExPEC</strain>
    </source>
</reference>
<protein>
    <recommendedName>
        <fullName evidence="1">Nitric oxide reductase FlRd-NAD(+) reductase</fullName>
        <ecNumber evidence="1">1.18.1.-</ecNumber>
    </recommendedName>
    <alternativeName>
        <fullName evidence="1">Flavorubredoxin reductase</fullName>
        <shortName evidence="1">FlRd-reductase</shortName>
        <shortName evidence="1">FlavoRb reductase</shortName>
    </alternativeName>
</protein>
<accession>B7NSJ1</accession>
<comment type="function">
    <text evidence="1">One of at least two accessory proteins for anaerobic nitric oxide (NO) reductase. Reduces the rubredoxin moiety of NO reductase.</text>
</comment>
<comment type="catalytic activity">
    <reaction evidence="1">
        <text>2 reduced [nitric oxide reductase rubredoxin domain] + NAD(+) + H(+) = 2 oxidized [nitric oxide reductase rubredoxin domain] + NADH</text>
        <dbReference type="Rhea" id="RHEA:42960"/>
        <dbReference type="Rhea" id="RHEA-COMP:10304"/>
        <dbReference type="Rhea" id="RHEA-COMP:10305"/>
        <dbReference type="ChEBI" id="CHEBI:15378"/>
        <dbReference type="ChEBI" id="CHEBI:29033"/>
        <dbReference type="ChEBI" id="CHEBI:29034"/>
        <dbReference type="ChEBI" id="CHEBI:57540"/>
        <dbReference type="ChEBI" id="CHEBI:57945"/>
    </reaction>
</comment>
<comment type="cofactor">
    <cofactor evidence="1">
        <name>FAD</name>
        <dbReference type="ChEBI" id="CHEBI:57692"/>
    </cofactor>
</comment>
<comment type="pathway">
    <text evidence="1">Nitrogen metabolism; nitric oxide reduction.</text>
</comment>
<comment type="subcellular location">
    <subcellularLocation>
        <location evidence="1">Cytoplasm</location>
    </subcellularLocation>
</comment>
<comment type="similarity">
    <text evidence="1">Belongs to the FAD-dependent oxidoreductase family.</text>
</comment>
<proteinExistence type="inferred from homology"/>
<organism>
    <name type="scientific">Escherichia coli O7:K1 (strain IAI39 / ExPEC)</name>
    <dbReference type="NCBI Taxonomy" id="585057"/>
    <lineage>
        <taxon>Bacteria</taxon>
        <taxon>Pseudomonadati</taxon>
        <taxon>Pseudomonadota</taxon>
        <taxon>Gammaproteobacteria</taxon>
        <taxon>Enterobacterales</taxon>
        <taxon>Enterobacteriaceae</taxon>
        <taxon>Escherichia</taxon>
    </lineage>
</organism>
<name>NORW_ECO7I</name>